<proteinExistence type="inferred from homology"/>
<keyword id="KW-0066">ATP synthesis</keyword>
<keyword id="KW-0375">Hydrogen ion transport</keyword>
<keyword id="KW-0406">Ion transport</keyword>
<keyword id="KW-0813">Transport</keyword>
<reference key="1">
    <citation type="journal article" date="2002" name="Proc. Natl. Acad. Sci. U.S.A.">
        <title>Genome sequence and comparative microarray analysis of serotype M18 group A Streptococcus strains associated with acute rheumatic fever outbreaks.</title>
        <authorList>
            <person name="Smoot J.C."/>
            <person name="Barbian K.D."/>
            <person name="Van Gompel J.J."/>
            <person name="Smoot L.M."/>
            <person name="Chaussee M.S."/>
            <person name="Sylva G.L."/>
            <person name="Sturdevant D.E."/>
            <person name="Ricklefs S.M."/>
            <person name="Porcella S.F."/>
            <person name="Parkins L.D."/>
            <person name="Beres S.B."/>
            <person name="Campbell D.S."/>
            <person name="Smith T.M."/>
            <person name="Zhang Q."/>
            <person name="Kapur V."/>
            <person name="Daly J.A."/>
            <person name="Veasy L.G."/>
            <person name="Musser J.M."/>
        </authorList>
    </citation>
    <scope>NUCLEOTIDE SEQUENCE [LARGE SCALE GENOMIC DNA]</scope>
    <source>
        <strain>MGAS8232</strain>
    </source>
</reference>
<organism>
    <name type="scientific">Streptococcus pyogenes serotype M18 (strain MGAS8232)</name>
    <dbReference type="NCBI Taxonomy" id="186103"/>
    <lineage>
        <taxon>Bacteria</taxon>
        <taxon>Bacillati</taxon>
        <taxon>Bacillota</taxon>
        <taxon>Bacilli</taxon>
        <taxon>Lactobacillales</taxon>
        <taxon>Streptococcaceae</taxon>
        <taxon>Streptococcus</taxon>
    </lineage>
</organism>
<evidence type="ECO:0000255" key="1">
    <source>
        <dbReference type="HAMAP-Rule" id="MF_00271"/>
    </source>
</evidence>
<gene>
    <name evidence="1" type="primary">atpD</name>
    <name type="ordered locus">spyM18_0153</name>
</gene>
<protein>
    <recommendedName>
        <fullName evidence="1">V-type ATP synthase subunit D</fullName>
    </recommendedName>
    <alternativeName>
        <fullName evidence="1">V-ATPase subunit D</fullName>
    </alternativeName>
</protein>
<feature type="chain" id="PRO_0000144271" description="V-type ATP synthase subunit D">
    <location>
        <begin position="1"/>
        <end position="208"/>
    </location>
</feature>
<name>VATD_STRP8</name>
<accession>Q8P2U4</accession>
<dbReference type="EMBL" id="AE009949">
    <property type="protein sequence ID" value="AAL96960.1"/>
    <property type="molecule type" value="Genomic_DNA"/>
</dbReference>
<dbReference type="RefSeq" id="WP_011017277.1">
    <property type="nucleotide sequence ID" value="NC_003485.1"/>
</dbReference>
<dbReference type="SMR" id="Q8P2U4"/>
<dbReference type="KEGG" id="spm:spyM18_0153"/>
<dbReference type="HOGENOM" id="CLU_069688_2_1_9"/>
<dbReference type="GO" id="GO:0005524">
    <property type="term" value="F:ATP binding"/>
    <property type="evidence" value="ECO:0007669"/>
    <property type="project" value="UniProtKB-UniRule"/>
</dbReference>
<dbReference type="GO" id="GO:0046933">
    <property type="term" value="F:proton-transporting ATP synthase activity, rotational mechanism"/>
    <property type="evidence" value="ECO:0007669"/>
    <property type="project" value="UniProtKB-UniRule"/>
</dbReference>
<dbReference type="GO" id="GO:0046961">
    <property type="term" value="F:proton-transporting ATPase activity, rotational mechanism"/>
    <property type="evidence" value="ECO:0007669"/>
    <property type="project" value="InterPro"/>
</dbReference>
<dbReference type="GO" id="GO:0042777">
    <property type="term" value="P:proton motive force-driven plasma membrane ATP synthesis"/>
    <property type="evidence" value="ECO:0007669"/>
    <property type="project" value="UniProtKB-UniRule"/>
</dbReference>
<dbReference type="FunFam" id="1.10.287.3240:FF:000007">
    <property type="entry name" value="V-type ATP synthase subunit D"/>
    <property type="match status" value="1"/>
</dbReference>
<dbReference type="Gene3D" id="1.10.287.3240">
    <property type="match status" value="1"/>
</dbReference>
<dbReference type="HAMAP" id="MF_00271">
    <property type="entry name" value="ATP_synth_D_arch"/>
    <property type="match status" value="1"/>
</dbReference>
<dbReference type="InterPro" id="IPR002699">
    <property type="entry name" value="V_ATPase_D"/>
</dbReference>
<dbReference type="NCBIfam" id="NF001546">
    <property type="entry name" value="PRK00373.1-5"/>
    <property type="match status" value="1"/>
</dbReference>
<dbReference type="NCBIfam" id="TIGR00309">
    <property type="entry name" value="V_ATPase_subD"/>
    <property type="match status" value="1"/>
</dbReference>
<dbReference type="PANTHER" id="PTHR11671">
    <property type="entry name" value="V-TYPE ATP SYNTHASE SUBUNIT D"/>
    <property type="match status" value="1"/>
</dbReference>
<dbReference type="Pfam" id="PF01813">
    <property type="entry name" value="ATP-synt_D"/>
    <property type="match status" value="1"/>
</dbReference>
<sequence>MARLNVKPTRMELSNLKNRLKTATRGHKLLKDKRDELMRRFVDLIRENNELRQTLEKELAANMKEFVLAKASENSLMVEELFAVPVHEVTLWIDIENIMSVNVPKFHVQSNTAREQEQGEFAYSYLSSNSEMDNTIQKTKELLEKLLRLAEVEKTCQLMADDIEKTRRRVNGLEYSIIPQLEETIHYIELKLEEAERASLVRIMKITS</sequence>
<comment type="function">
    <text evidence="1">Produces ATP from ADP in the presence of a proton gradient across the membrane.</text>
</comment>
<comment type="similarity">
    <text evidence="1">Belongs to the V-ATPase D subunit family.</text>
</comment>